<feature type="chain" id="PRO_0000230751" description="Small ribosomal subunit protein uS3c">
    <location>
        <begin position="1"/>
        <end position="218"/>
    </location>
</feature>
<feature type="domain" description="KH type-2">
    <location>
        <begin position="43"/>
        <end position="118"/>
    </location>
</feature>
<name>RR3_GOSHI</name>
<comment type="subunit">
    <text evidence="1">Part of the 30S ribosomal subunit.</text>
</comment>
<comment type="subcellular location">
    <subcellularLocation>
        <location>Plastid</location>
        <location>Chloroplast</location>
    </subcellularLocation>
</comment>
<comment type="similarity">
    <text evidence="2">Belongs to the universal ribosomal protein uS3 family.</text>
</comment>
<reference key="1">
    <citation type="journal article" date="2006" name="BMC Genomics">
        <title>The complete chloroplast genome sequence of Gossypium hirsutum: organization and phylogenetic relationships to other angiosperms.</title>
        <authorList>
            <person name="Lee S.-B."/>
            <person name="Kaittanis C."/>
            <person name="Jansen R.K."/>
            <person name="Hostetler J.B."/>
            <person name="Tallon L.J."/>
            <person name="Town C.D."/>
            <person name="Daniell H."/>
        </authorList>
    </citation>
    <scope>NUCLEOTIDE SEQUENCE [LARGE SCALE GENOMIC DNA]</scope>
    <source>
        <strain>cv. Coker 310FR</strain>
    </source>
</reference>
<accession>Q2L946</accession>
<dbReference type="EMBL" id="DQ345959">
    <property type="protein sequence ID" value="ABC73665.1"/>
    <property type="molecule type" value="Genomic_DNA"/>
</dbReference>
<dbReference type="RefSeq" id="YP_538974.1">
    <property type="nucleotide sequence ID" value="NC_007944.1"/>
</dbReference>
<dbReference type="SMR" id="Q2L946"/>
<dbReference type="GeneID" id="3989142"/>
<dbReference type="KEGG" id="ghi:3989142"/>
<dbReference type="OrthoDB" id="8848at41938"/>
<dbReference type="Proteomes" id="UP000189702">
    <property type="component" value="Chloroplast Pltd"/>
</dbReference>
<dbReference type="GO" id="GO:0009507">
    <property type="term" value="C:chloroplast"/>
    <property type="evidence" value="ECO:0007669"/>
    <property type="project" value="UniProtKB-SubCell"/>
</dbReference>
<dbReference type="GO" id="GO:0022627">
    <property type="term" value="C:cytosolic small ribosomal subunit"/>
    <property type="evidence" value="ECO:0000318"/>
    <property type="project" value="GO_Central"/>
</dbReference>
<dbReference type="GO" id="GO:0019843">
    <property type="term" value="F:rRNA binding"/>
    <property type="evidence" value="ECO:0007669"/>
    <property type="project" value="UniProtKB-UniRule"/>
</dbReference>
<dbReference type="GO" id="GO:0003735">
    <property type="term" value="F:structural constituent of ribosome"/>
    <property type="evidence" value="ECO:0000318"/>
    <property type="project" value="GO_Central"/>
</dbReference>
<dbReference type="GO" id="GO:0006412">
    <property type="term" value="P:translation"/>
    <property type="evidence" value="ECO:0007669"/>
    <property type="project" value="UniProtKB-UniRule"/>
</dbReference>
<dbReference type="CDD" id="cd02412">
    <property type="entry name" value="KH-II_30S_S3"/>
    <property type="match status" value="1"/>
</dbReference>
<dbReference type="FunFam" id="3.30.1140.32:FF:000003">
    <property type="entry name" value="30S ribosomal protein S3, chloroplastic"/>
    <property type="match status" value="1"/>
</dbReference>
<dbReference type="FunFam" id="3.30.300.20:FF:000008">
    <property type="entry name" value="30S ribosomal protein S3, chloroplastic"/>
    <property type="match status" value="1"/>
</dbReference>
<dbReference type="Gene3D" id="3.30.300.20">
    <property type="match status" value="1"/>
</dbReference>
<dbReference type="Gene3D" id="3.30.1140.32">
    <property type="entry name" value="Ribosomal protein S3, C-terminal domain"/>
    <property type="match status" value="1"/>
</dbReference>
<dbReference type="HAMAP" id="MF_01309_B">
    <property type="entry name" value="Ribosomal_uS3_B"/>
    <property type="match status" value="1"/>
</dbReference>
<dbReference type="InterPro" id="IPR015946">
    <property type="entry name" value="KH_dom-like_a/b"/>
</dbReference>
<dbReference type="InterPro" id="IPR004044">
    <property type="entry name" value="KH_dom_type_2"/>
</dbReference>
<dbReference type="InterPro" id="IPR009019">
    <property type="entry name" value="KH_sf_prok-type"/>
</dbReference>
<dbReference type="InterPro" id="IPR036419">
    <property type="entry name" value="Ribosomal_S3_C_sf"/>
</dbReference>
<dbReference type="InterPro" id="IPR005704">
    <property type="entry name" value="Ribosomal_uS3_bac-typ"/>
</dbReference>
<dbReference type="InterPro" id="IPR001351">
    <property type="entry name" value="Ribosomal_uS3_C"/>
</dbReference>
<dbReference type="InterPro" id="IPR018280">
    <property type="entry name" value="Ribosomal_uS3_CS"/>
</dbReference>
<dbReference type="NCBIfam" id="TIGR01009">
    <property type="entry name" value="rpsC_bact"/>
    <property type="match status" value="1"/>
</dbReference>
<dbReference type="PANTHER" id="PTHR11760">
    <property type="entry name" value="30S/40S RIBOSOMAL PROTEIN S3"/>
    <property type="match status" value="1"/>
</dbReference>
<dbReference type="PANTHER" id="PTHR11760:SF19">
    <property type="entry name" value="SMALL RIBOSOMAL SUBUNIT PROTEIN US3C"/>
    <property type="match status" value="1"/>
</dbReference>
<dbReference type="Pfam" id="PF00189">
    <property type="entry name" value="Ribosomal_S3_C"/>
    <property type="match status" value="1"/>
</dbReference>
<dbReference type="SUPFAM" id="SSF54814">
    <property type="entry name" value="Prokaryotic type KH domain (KH-domain type II)"/>
    <property type="match status" value="1"/>
</dbReference>
<dbReference type="SUPFAM" id="SSF54821">
    <property type="entry name" value="Ribosomal protein S3 C-terminal domain"/>
    <property type="match status" value="1"/>
</dbReference>
<dbReference type="PROSITE" id="PS50823">
    <property type="entry name" value="KH_TYPE_2"/>
    <property type="match status" value="1"/>
</dbReference>
<dbReference type="PROSITE" id="PS00548">
    <property type="entry name" value="RIBOSOMAL_S3"/>
    <property type="match status" value="1"/>
</dbReference>
<evidence type="ECO:0000250" key="1"/>
<evidence type="ECO:0000305" key="2"/>
<organism>
    <name type="scientific">Gossypium hirsutum</name>
    <name type="common">Upland cotton</name>
    <name type="synonym">Gossypium mexicanum</name>
    <dbReference type="NCBI Taxonomy" id="3635"/>
    <lineage>
        <taxon>Eukaryota</taxon>
        <taxon>Viridiplantae</taxon>
        <taxon>Streptophyta</taxon>
        <taxon>Embryophyta</taxon>
        <taxon>Tracheophyta</taxon>
        <taxon>Spermatophyta</taxon>
        <taxon>Magnoliopsida</taxon>
        <taxon>eudicotyledons</taxon>
        <taxon>Gunneridae</taxon>
        <taxon>Pentapetalae</taxon>
        <taxon>rosids</taxon>
        <taxon>malvids</taxon>
        <taxon>Malvales</taxon>
        <taxon>Malvaceae</taxon>
        <taxon>Malvoideae</taxon>
        <taxon>Gossypium</taxon>
    </lineage>
</organism>
<geneLocation type="chloroplast"/>
<keyword id="KW-0150">Chloroplast</keyword>
<keyword id="KW-0934">Plastid</keyword>
<keyword id="KW-1185">Reference proteome</keyword>
<keyword id="KW-0687">Ribonucleoprotein</keyword>
<keyword id="KW-0689">Ribosomal protein</keyword>
<keyword id="KW-0694">RNA-binding</keyword>
<keyword id="KW-0699">rRNA-binding</keyword>
<sequence length="218" mass="25165">MGQKINPLGFRLGTTQSHHSLWFAQPKKYSEGLQEDKKIRDCIKNYVQKNTRLSSGVEGIARIEIQKRLDLIQVIIYMGFPKLLIEDKPRKLEELQMNVQKELNCMNRKLNIAITRIGNPYGHPNILAEFIAGQLKNRVSFRKAMKKAIELTEQADTKGIQIQIAGRIDGKEIARVEWIREGRVPLQTIGAKIEYCSYRVRTIYGVLGIKIWIFIDEE</sequence>
<proteinExistence type="inferred from homology"/>
<protein>
    <recommendedName>
        <fullName evidence="2">Small ribosomal subunit protein uS3c</fullName>
    </recommendedName>
    <alternativeName>
        <fullName>30S ribosomal protein S3, chloroplastic</fullName>
    </alternativeName>
</protein>
<gene>
    <name type="primary">rps3</name>
</gene>